<reference evidence="5" key="1">
    <citation type="journal article" date="2012" name="Syst. Biol.">
        <title>Peptidomics-based phylogeny and biogeography of Mantophasmatodea (Hexapoda).</title>
        <authorList>
            <person name="Predel R."/>
            <person name="Neupert S."/>
            <person name="Huetteroth W."/>
            <person name="Kahnt J."/>
            <person name="Waidelich D."/>
            <person name="Roth S."/>
        </authorList>
    </citation>
    <scope>PROTEIN SEQUENCE</scope>
    <scope>AMIDATION AT MET-8</scope>
    <source>
        <tissue evidence="3">Corpora cardiaca</tissue>
    </source>
</reference>
<evidence type="ECO:0000250" key="1">
    <source>
        <dbReference type="UniProtKB" id="P82619"/>
    </source>
</evidence>
<evidence type="ECO:0000255" key="2"/>
<evidence type="ECO:0000269" key="3">
    <source>
    </source>
</evidence>
<evidence type="ECO:0000303" key="4">
    <source>
    </source>
</evidence>
<evidence type="ECO:0000305" key="5"/>
<evidence type="ECO:0000305" key="6">
    <source>
    </source>
</evidence>
<keyword id="KW-0027">Amidation</keyword>
<keyword id="KW-0903">Direct protein sequencing</keyword>
<keyword id="KW-0527">Neuropeptide</keyword>
<keyword id="KW-0964">Secreted</keyword>
<protein>
    <recommendedName>
        <fullName evidence="4">Pyrokinin-3</fullName>
        <shortName evidence="4">PK-3</shortName>
    </recommendedName>
    <alternativeName>
        <fullName evidence="1">FXPRL-amide</fullName>
    </alternativeName>
</protein>
<feature type="peptide" id="PRO_0000420785" description="Pyrokinin-3" evidence="3">
    <location>
        <begin position="1"/>
        <end position="8"/>
    </location>
</feature>
<feature type="modified residue" description="Methionine amide" evidence="3">
    <location>
        <position position="8"/>
    </location>
</feature>
<accession>B0M3E0</accession>
<proteinExistence type="evidence at protein level"/>
<comment type="function">
    <text evidence="1">Myoactive.</text>
</comment>
<comment type="subcellular location">
    <subcellularLocation>
        <location evidence="6">Secreted</location>
    </subcellularLocation>
</comment>
<comment type="similarity">
    <text evidence="2">Belongs to the pyrokinin family.</text>
</comment>
<organism>
    <name type="scientific">Mantophasma kudubergense</name>
    <name type="common">Gladiator</name>
    <name type="synonym">Heel-walker</name>
    <dbReference type="NCBI Taxonomy" id="1037657"/>
    <lineage>
        <taxon>Eukaryota</taxon>
        <taxon>Metazoa</taxon>
        <taxon>Ecdysozoa</taxon>
        <taxon>Arthropoda</taxon>
        <taxon>Hexapoda</taxon>
        <taxon>Insecta</taxon>
        <taxon>Pterygota</taxon>
        <taxon>Neoptera</taxon>
        <taxon>Polyneoptera</taxon>
        <taxon>Mantophasmatodea</taxon>
        <taxon>Mantophasmatidae</taxon>
        <taxon>Mantophasma</taxon>
    </lineage>
</organism>
<name>PPK3_MANKU</name>
<dbReference type="GO" id="GO:0005576">
    <property type="term" value="C:extracellular region"/>
    <property type="evidence" value="ECO:0007669"/>
    <property type="project" value="UniProtKB-SubCell"/>
</dbReference>
<dbReference type="GO" id="GO:0007218">
    <property type="term" value="P:neuropeptide signaling pathway"/>
    <property type="evidence" value="ECO:0007669"/>
    <property type="project" value="UniProtKB-KW"/>
</dbReference>
<sequence>DPPFAPRM</sequence>